<feature type="chain" id="PRO_1000022835" description="2-C-methyl-D-erythritol 2,4-cyclodiphosphate synthase">
    <location>
        <begin position="1"/>
        <end position="160"/>
    </location>
</feature>
<feature type="binding site" evidence="1">
    <location>
        <begin position="14"/>
        <end position="16"/>
    </location>
    <ligand>
        <name>4-CDP-2-C-methyl-D-erythritol 2-phosphate</name>
        <dbReference type="ChEBI" id="CHEBI:57919"/>
    </ligand>
</feature>
<feature type="binding site" evidence="1">
    <location>
        <position position="14"/>
    </location>
    <ligand>
        <name>a divalent metal cation</name>
        <dbReference type="ChEBI" id="CHEBI:60240"/>
    </ligand>
</feature>
<feature type="binding site" evidence="1">
    <location>
        <position position="16"/>
    </location>
    <ligand>
        <name>a divalent metal cation</name>
        <dbReference type="ChEBI" id="CHEBI:60240"/>
    </ligand>
</feature>
<feature type="binding site" evidence="1">
    <location>
        <begin position="40"/>
        <end position="41"/>
    </location>
    <ligand>
        <name>4-CDP-2-C-methyl-D-erythritol 2-phosphate</name>
        <dbReference type="ChEBI" id="CHEBI:57919"/>
    </ligand>
</feature>
<feature type="binding site" evidence="1">
    <location>
        <position position="48"/>
    </location>
    <ligand>
        <name>a divalent metal cation</name>
        <dbReference type="ChEBI" id="CHEBI:60240"/>
    </ligand>
</feature>
<feature type="binding site" evidence="1">
    <location>
        <begin position="62"/>
        <end position="64"/>
    </location>
    <ligand>
        <name>4-CDP-2-C-methyl-D-erythritol 2-phosphate</name>
        <dbReference type="ChEBI" id="CHEBI:57919"/>
    </ligand>
</feature>
<feature type="binding site" evidence="1">
    <location>
        <begin position="135"/>
        <end position="138"/>
    </location>
    <ligand>
        <name>4-CDP-2-C-methyl-D-erythritol 2-phosphate</name>
        <dbReference type="ChEBI" id="CHEBI:57919"/>
    </ligand>
</feature>
<feature type="binding site" evidence="1">
    <location>
        <position position="145"/>
    </location>
    <ligand>
        <name>4-CDP-2-C-methyl-D-erythritol 2-phosphate</name>
        <dbReference type="ChEBI" id="CHEBI:57919"/>
    </ligand>
</feature>
<feature type="site" description="Transition state stabilizer" evidence="1">
    <location>
        <position position="40"/>
    </location>
</feature>
<feature type="site" description="Transition state stabilizer" evidence="1">
    <location>
        <position position="136"/>
    </location>
</feature>
<reference key="1">
    <citation type="journal article" date="2007" name="Genome Res.">
        <title>Genome characteristics of facultatively symbiotic Frankia sp. strains reflect host range and host plant biogeography.</title>
        <authorList>
            <person name="Normand P."/>
            <person name="Lapierre P."/>
            <person name="Tisa L.S."/>
            <person name="Gogarten J.P."/>
            <person name="Alloisio N."/>
            <person name="Bagnarol E."/>
            <person name="Bassi C.A."/>
            <person name="Berry A.M."/>
            <person name="Bickhart D.M."/>
            <person name="Choisne N."/>
            <person name="Couloux A."/>
            <person name="Cournoyer B."/>
            <person name="Cruveiller S."/>
            <person name="Daubin V."/>
            <person name="Demange N."/>
            <person name="Francino M.P."/>
            <person name="Goltsman E."/>
            <person name="Huang Y."/>
            <person name="Kopp O.R."/>
            <person name="Labarre L."/>
            <person name="Lapidus A."/>
            <person name="Lavire C."/>
            <person name="Marechal J."/>
            <person name="Martinez M."/>
            <person name="Mastronunzio J.E."/>
            <person name="Mullin B.C."/>
            <person name="Niemann J."/>
            <person name="Pujic P."/>
            <person name="Rawnsley T."/>
            <person name="Rouy Z."/>
            <person name="Schenowitz C."/>
            <person name="Sellstedt A."/>
            <person name="Tavares F."/>
            <person name="Tomkins J.P."/>
            <person name="Vallenet D."/>
            <person name="Valverde C."/>
            <person name="Wall L.G."/>
            <person name="Wang Y."/>
            <person name="Medigue C."/>
            <person name="Benson D.R."/>
        </authorList>
    </citation>
    <scope>NUCLEOTIDE SEQUENCE [LARGE SCALE GENOMIC DNA]</scope>
    <source>
        <strain>DSM 45986 / CECT 9034 / ACN14a</strain>
    </source>
</reference>
<evidence type="ECO:0000255" key="1">
    <source>
        <dbReference type="HAMAP-Rule" id="MF_00107"/>
    </source>
</evidence>
<sequence length="160" mass="15977">MTTAVLPRVGIGVDVHPFAAGRPCWVACLEWPGETGLAGHSDGDVAAHATCDALLTASCLGDLGKVFGTDRPEYAGASGAVLLAETARLLAVGGWVIGNVSVQVIGNRPRMAARREQAQAAMSAALGASVSLSATTTDGLGLTGRGEGLAAIATALVVRA</sequence>
<dbReference type="EC" id="4.6.1.12" evidence="1"/>
<dbReference type="EMBL" id="CT573213">
    <property type="protein sequence ID" value="CAJ65146.1"/>
    <property type="molecule type" value="Genomic_DNA"/>
</dbReference>
<dbReference type="RefSeq" id="WP_011607564.1">
    <property type="nucleotide sequence ID" value="NC_008278.1"/>
</dbReference>
<dbReference type="SMR" id="Q0RBN8"/>
<dbReference type="STRING" id="326424.FRAAL6523"/>
<dbReference type="KEGG" id="fal:FRAAL6523"/>
<dbReference type="eggNOG" id="COG0245">
    <property type="taxonomic scope" value="Bacteria"/>
</dbReference>
<dbReference type="HOGENOM" id="CLU_084630_1_0_11"/>
<dbReference type="OrthoDB" id="9804336at2"/>
<dbReference type="UniPathway" id="UPA00056">
    <property type="reaction ID" value="UER00095"/>
</dbReference>
<dbReference type="Proteomes" id="UP000000657">
    <property type="component" value="Chromosome"/>
</dbReference>
<dbReference type="GO" id="GO:0008685">
    <property type="term" value="F:2-C-methyl-D-erythritol 2,4-cyclodiphosphate synthase activity"/>
    <property type="evidence" value="ECO:0007669"/>
    <property type="project" value="UniProtKB-UniRule"/>
</dbReference>
<dbReference type="GO" id="GO:0046872">
    <property type="term" value="F:metal ion binding"/>
    <property type="evidence" value="ECO:0007669"/>
    <property type="project" value="UniProtKB-KW"/>
</dbReference>
<dbReference type="GO" id="GO:0019288">
    <property type="term" value="P:isopentenyl diphosphate biosynthetic process, methylerythritol 4-phosphate pathway"/>
    <property type="evidence" value="ECO:0007669"/>
    <property type="project" value="UniProtKB-UniRule"/>
</dbReference>
<dbReference type="GO" id="GO:0016114">
    <property type="term" value="P:terpenoid biosynthetic process"/>
    <property type="evidence" value="ECO:0007669"/>
    <property type="project" value="InterPro"/>
</dbReference>
<dbReference type="CDD" id="cd00554">
    <property type="entry name" value="MECDP_synthase"/>
    <property type="match status" value="1"/>
</dbReference>
<dbReference type="FunFam" id="3.30.1330.50:FF:000003">
    <property type="entry name" value="2-C-methyl-D-erythritol 2,4-cyclodiphosphate synthase"/>
    <property type="match status" value="1"/>
</dbReference>
<dbReference type="Gene3D" id="3.30.1330.50">
    <property type="entry name" value="2-C-methyl-D-erythritol 2,4-cyclodiphosphate synthase"/>
    <property type="match status" value="1"/>
</dbReference>
<dbReference type="HAMAP" id="MF_00107">
    <property type="entry name" value="IspF"/>
    <property type="match status" value="1"/>
</dbReference>
<dbReference type="InterPro" id="IPR003526">
    <property type="entry name" value="MECDP_synthase"/>
</dbReference>
<dbReference type="InterPro" id="IPR036571">
    <property type="entry name" value="MECDP_synthase_sf"/>
</dbReference>
<dbReference type="NCBIfam" id="TIGR00151">
    <property type="entry name" value="ispF"/>
    <property type="match status" value="1"/>
</dbReference>
<dbReference type="PANTHER" id="PTHR43181">
    <property type="entry name" value="2-C-METHYL-D-ERYTHRITOL 2,4-CYCLODIPHOSPHATE SYNTHASE, CHLOROPLASTIC"/>
    <property type="match status" value="1"/>
</dbReference>
<dbReference type="PANTHER" id="PTHR43181:SF1">
    <property type="entry name" value="2-C-METHYL-D-ERYTHRITOL 2,4-CYCLODIPHOSPHATE SYNTHASE, CHLOROPLASTIC"/>
    <property type="match status" value="1"/>
</dbReference>
<dbReference type="Pfam" id="PF02542">
    <property type="entry name" value="YgbB"/>
    <property type="match status" value="1"/>
</dbReference>
<dbReference type="SUPFAM" id="SSF69765">
    <property type="entry name" value="IpsF-like"/>
    <property type="match status" value="1"/>
</dbReference>
<accession>Q0RBN8</accession>
<comment type="function">
    <text evidence="1">Involved in the biosynthesis of isopentenyl diphosphate (IPP) and dimethylallyl diphosphate (DMAPP), two major building blocks of isoprenoid compounds. Catalyzes the conversion of 4-diphosphocytidyl-2-C-methyl-D-erythritol 2-phosphate (CDP-ME2P) to 2-C-methyl-D-erythritol 2,4-cyclodiphosphate (ME-CPP) with a corresponding release of cytidine 5-monophosphate (CMP).</text>
</comment>
<comment type="catalytic activity">
    <reaction evidence="1">
        <text>4-CDP-2-C-methyl-D-erythritol 2-phosphate = 2-C-methyl-D-erythritol 2,4-cyclic diphosphate + CMP</text>
        <dbReference type="Rhea" id="RHEA:23864"/>
        <dbReference type="ChEBI" id="CHEBI:57919"/>
        <dbReference type="ChEBI" id="CHEBI:58483"/>
        <dbReference type="ChEBI" id="CHEBI:60377"/>
        <dbReference type="EC" id="4.6.1.12"/>
    </reaction>
</comment>
<comment type="cofactor">
    <cofactor evidence="1">
        <name>a divalent metal cation</name>
        <dbReference type="ChEBI" id="CHEBI:60240"/>
    </cofactor>
    <text evidence="1">Binds 1 divalent metal cation per subunit.</text>
</comment>
<comment type="pathway">
    <text evidence="1">Isoprenoid biosynthesis; isopentenyl diphosphate biosynthesis via DXP pathway; isopentenyl diphosphate from 1-deoxy-D-xylulose 5-phosphate: step 4/6.</text>
</comment>
<comment type="subunit">
    <text evidence="1">Homotrimer.</text>
</comment>
<comment type="similarity">
    <text evidence="1">Belongs to the IspF family.</text>
</comment>
<keyword id="KW-0414">Isoprene biosynthesis</keyword>
<keyword id="KW-0456">Lyase</keyword>
<keyword id="KW-0479">Metal-binding</keyword>
<keyword id="KW-1185">Reference proteome</keyword>
<organism>
    <name type="scientific">Frankia alni (strain DSM 45986 / CECT 9034 / ACN14a)</name>
    <dbReference type="NCBI Taxonomy" id="326424"/>
    <lineage>
        <taxon>Bacteria</taxon>
        <taxon>Bacillati</taxon>
        <taxon>Actinomycetota</taxon>
        <taxon>Actinomycetes</taxon>
        <taxon>Frankiales</taxon>
        <taxon>Frankiaceae</taxon>
        <taxon>Frankia</taxon>
    </lineage>
</organism>
<name>ISPF_FRAAA</name>
<protein>
    <recommendedName>
        <fullName evidence="1">2-C-methyl-D-erythritol 2,4-cyclodiphosphate synthase</fullName>
        <shortName evidence="1">MECDP-synthase</shortName>
        <shortName evidence="1">MECPP-synthase</shortName>
        <shortName evidence="1">MECPS</shortName>
        <ecNumber evidence="1">4.6.1.12</ecNumber>
    </recommendedName>
</protein>
<proteinExistence type="inferred from homology"/>
<gene>
    <name evidence="1" type="primary">ispF</name>
    <name type="ordered locus">FRAAL6523</name>
</gene>